<feature type="transit peptide" description="Mitochondrion" evidence="3">
    <location>
        <begin position="1"/>
        <end position="53"/>
    </location>
</feature>
<feature type="chain" id="PRO_0000001241" description="5-aminolevulinate synthase, mitochondrial">
    <location>
        <begin position="54"/>
        <end position="570"/>
    </location>
</feature>
<feature type="active site" evidence="2">
    <location>
        <position position="359"/>
    </location>
</feature>
<feature type="binding site" evidence="2">
    <location>
        <position position="119"/>
    </location>
    <ligand>
        <name>substrate</name>
    </ligand>
</feature>
<feature type="binding site" evidence="2">
    <location>
        <position position="232"/>
    </location>
    <ligand>
        <name>substrate</name>
    </ligand>
</feature>
<feature type="binding site" evidence="2">
    <location>
        <position position="251"/>
    </location>
    <ligand>
        <name>substrate</name>
    </ligand>
</feature>
<feature type="binding site" description="in other chain" evidence="2">
    <location>
        <position position="284"/>
    </location>
    <ligand>
        <name>pyridoxal 5'-phosphate</name>
        <dbReference type="ChEBI" id="CHEBI:597326"/>
        <note>ligand shared between dimeric partners</note>
    </ligand>
</feature>
<feature type="binding site" description="in other chain" evidence="2">
    <location>
        <position position="312"/>
    </location>
    <ligand>
        <name>pyridoxal 5'-phosphate</name>
        <dbReference type="ChEBI" id="CHEBI:597326"/>
        <note>ligand shared between dimeric partners</note>
    </ligand>
</feature>
<feature type="binding site" description="in other chain" evidence="2">
    <location>
        <position position="356"/>
    </location>
    <ligand>
        <name>pyridoxal 5'-phosphate</name>
        <dbReference type="ChEBI" id="CHEBI:597326"/>
        <note>ligand shared between dimeric partners</note>
    </ligand>
</feature>
<feature type="binding site" evidence="2">
    <location>
        <position position="388"/>
    </location>
    <ligand>
        <name>pyridoxal 5'-phosphate</name>
        <dbReference type="ChEBI" id="CHEBI:597326"/>
        <note>ligand shared between dimeric partners</note>
    </ligand>
</feature>
<feature type="binding site" evidence="2">
    <location>
        <position position="389"/>
    </location>
    <ligand>
        <name>pyridoxal 5'-phosphate</name>
        <dbReference type="ChEBI" id="CHEBI:597326"/>
        <note>ligand shared between dimeric partners</note>
    </ligand>
</feature>
<feature type="binding site" evidence="2">
    <location>
        <position position="474"/>
    </location>
    <ligand>
        <name>substrate</name>
    </ligand>
</feature>
<feature type="modified residue" description="N6-(pyridoxal phosphate)lysine" evidence="2">
    <location>
        <position position="359"/>
    </location>
</feature>
<feature type="sequence conflict" description="In Ref. 1; CAA63497." evidence="4" ref="1">
    <original>A</original>
    <variation>R</variation>
    <location>
        <position position="332"/>
    </location>
</feature>
<feature type="sequence conflict" description="In Ref. 1; CAA63497." evidence="4" ref="1">
    <original>T</original>
    <variation>S</variation>
    <location>
        <position position="487"/>
    </location>
</feature>
<sequence>MESVIRSSAKICPFMHSATGSMQSVKALKNANLPAIAQQCPFMGKAMEQRRGYASSASGASAAAAATATASTSASNSNSSVEASASADVVDHATKEASFDYQGLFDSDLAKKRMDKSYRFFNNINRLAKEFPMAHRKLEDDKVTVWCSNDYLALSKNQEVIEVMKKTLDKYGAGAGGTRNIAGHNKHALQLEAELATLHKKEGALVFSSCFVANDAVISLLGQKIKDLVIFSDELNHASMIVGIKHASTKKHIFKHNNLDQLEELLAMYPKSTPKLIAFESVYSMSGSVADIDKICDLAEKYGALTFLDEVHAVGLYGPHGAGVAEHCNFDAHRKAGIASPEFRTVMDRVDMITGTLGKSFGTVGGYVAGSLQLIDWVRSYAPGFIFTTTLPPAVMAGAAEAIRYQRSHLDLRQDQQRHTTYVKDGLADLGIPVMPNPSHIVPVLVGNPHLAKQASDILMDKHRIYVQAINFPTVARGTERLRITPTPGHTNDLSDILMDALEDVWSTLQLPRVRDWEAQGGLLGVGDPNHVPQPNLWTKDQLTLTNNDLHPNVKQPIIEQLEVSSGIRY</sequence>
<dbReference type="EC" id="2.3.1.37"/>
<dbReference type="EMBL" id="X92944">
    <property type="protein sequence ID" value="CAA63497.1"/>
    <property type="molecule type" value="Genomic_DNA"/>
</dbReference>
<dbReference type="EMBL" id="CR382123">
    <property type="protein sequence ID" value="CAH01726.1"/>
    <property type="molecule type" value="Genomic_DNA"/>
</dbReference>
<dbReference type="RefSeq" id="XP_452875.1">
    <property type="nucleotide sequence ID" value="XM_452875.1"/>
</dbReference>
<dbReference type="SMR" id="P78698"/>
<dbReference type="FunCoup" id="P78698">
    <property type="interactions" value="502"/>
</dbReference>
<dbReference type="STRING" id="284590.P78698"/>
<dbReference type="PaxDb" id="284590-P78698"/>
<dbReference type="KEGG" id="kla:KLLA0_C15059g"/>
<dbReference type="eggNOG" id="KOG1360">
    <property type="taxonomic scope" value="Eukaryota"/>
</dbReference>
<dbReference type="HOGENOM" id="CLU_015846_6_0_1"/>
<dbReference type="InParanoid" id="P78698"/>
<dbReference type="OMA" id="ARRCPIM"/>
<dbReference type="UniPathway" id="UPA00251">
    <property type="reaction ID" value="UER00375"/>
</dbReference>
<dbReference type="Proteomes" id="UP000000598">
    <property type="component" value="Chromosome C"/>
</dbReference>
<dbReference type="GO" id="GO:0005759">
    <property type="term" value="C:mitochondrial matrix"/>
    <property type="evidence" value="ECO:0007669"/>
    <property type="project" value="UniProtKB-SubCell"/>
</dbReference>
<dbReference type="GO" id="GO:0003870">
    <property type="term" value="F:5-aminolevulinate synthase activity"/>
    <property type="evidence" value="ECO:0007669"/>
    <property type="project" value="UniProtKB-EC"/>
</dbReference>
<dbReference type="GO" id="GO:0030170">
    <property type="term" value="F:pyridoxal phosphate binding"/>
    <property type="evidence" value="ECO:0007669"/>
    <property type="project" value="InterPro"/>
</dbReference>
<dbReference type="GO" id="GO:0006782">
    <property type="term" value="P:protoporphyrinogen IX biosynthetic process"/>
    <property type="evidence" value="ECO:0007669"/>
    <property type="project" value="UniProtKB-UniPathway"/>
</dbReference>
<dbReference type="CDD" id="cd06454">
    <property type="entry name" value="KBL_like"/>
    <property type="match status" value="1"/>
</dbReference>
<dbReference type="FunFam" id="3.40.640.10:FF:000006">
    <property type="entry name" value="5-aminolevulinate synthase, mitochondrial"/>
    <property type="match status" value="1"/>
</dbReference>
<dbReference type="Gene3D" id="3.90.1150.10">
    <property type="entry name" value="Aspartate Aminotransferase, domain 1"/>
    <property type="match status" value="1"/>
</dbReference>
<dbReference type="Gene3D" id="3.40.640.10">
    <property type="entry name" value="Type I PLP-dependent aspartate aminotransferase-like (Major domain)"/>
    <property type="match status" value="1"/>
</dbReference>
<dbReference type="InterPro" id="IPR010961">
    <property type="entry name" value="4pyrrol_synth_NH2levulA_synth"/>
</dbReference>
<dbReference type="InterPro" id="IPR001917">
    <property type="entry name" value="Aminotrans_II_pyridoxalP_BS"/>
</dbReference>
<dbReference type="InterPro" id="IPR004839">
    <property type="entry name" value="Aminotransferase_I/II_large"/>
</dbReference>
<dbReference type="InterPro" id="IPR050087">
    <property type="entry name" value="AON_synthase_class-II"/>
</dbReference>
<dbReference type="InterPro" id="IPR015424">
    <property type="entry name" value="PyrdxlP-dep_Trfase"/>
</dbReference>
<dbReference type="InterPro" id="IPR015421">
    <property type="entry name" value="PyrdxlP-dep_Trfase_major"/>
</dbReference>
<dbReference type="InterPro" id="IPR015422">
    <property type="entry name" value="PyrdxlP-dep_Trfase_small"/>
</dbReference>
<dbReference type="NCBIfam" id="TIGR01821">
    <property type="entry name" value="5aminolev_synth"/>
    <property type="match status" value="1"/>
</dbReference>
<dbReference type="PANTHER" id="PTHR13693:SF102">
    <property type="entry name" value="2-AMINO-3-KETOBUTYRATE COENZYME A LIGASE, MITOCHONDRIAL"/>
    <property type="match status" value="1"/>
</dbReference>
<dbReference type="PANTHER" id="PTHR13693">
    <property type="entry name" value="CLASS II AMINOTRANSFERASE/8-AMINO-7-OXONONANOATE SYNTHASE"/>
    <property type="match status" value="1"/>
</dbReference>
<dbReference type="Pfam" id="PF00155">
    <property type="entry name" value="Aminotran_1_2"/>
    <property type="match status" value="1"/>
</dbReference>
<dbReference type="SUPFAM" id="SSF53383">
    <property type="entry name" value="PLP-dependent transferases"/>
    <property type="match status" value="1"/>
</dbReference>
<dbReference type="PROSITE" id="PS00599">
    <property type="entry name" value="AA_TRANSFER_CLASS_2"/>
    <property type="match status" value="1"/>
</dbReference>
<comment type="function">
    <text evidence="1">Catalyzes the synthesis of 5-aminolevulinate (ALA) from succinyl-CoA and glycine, the first and rate-limiting step in heme biosynthesis.</text>
</comment>
<comment type="catalytic activity">
    <reaction evidence="1">
        <text>succinyl-CoA + glycine + H(+) = 5-aminolevulinate + CO2 + CoA</text>
        <dbReference type="Rhea" id="RHEA:12921"/>
        <dbReference type="ChEBI" id="CHEBI:15378"/>
        <dbReference type="ChEBI" id="CHEBI:16526"/>
        <dbReference type="ChEBI" id="CHEBI:57287"/>
        <dbReference type="ChEBI" id="CHEBI:57292"/>
        <dbReference type="ChEBI" id="CHEBI:57305"/>
        <dbReference type="ChEBI" id="CHEBI:356416"/>
        <dbReference type="EC" id="2.3.1.37"/>
    </reaction>
</comment>
<comment type="cofactor">
    <cofactor evidence="1">
        <name>pyridoxal 5'-phosphate</name>
        <dbReference type="ChEBI" id="CHEBI:597326"/>
    </cofactor>
</comment>
<comment type="pathway">
    <text evidence="1">Porphyrin-containing compound metabolism; protoporphyrin-IX biosynthesis; 5-aminolevulinate from glycine: step 1/1.</text>
</comment>
<comment type="subunit">
    <text evidence="1">Homodimer.</text>
</comment>
<comment type="subcellular location">
    <subcellularLocation>
        <location evidence="1">Mitochondrion matrix</location>
    </subcellularLocation>
</comment>
<comment type="similarity">
    <text evidence="4">Belongs to the class-II pyridoxal-phosphate-dependent aminotransferase family.</text>
</comment>
<reference key="1">
    <citation type="journal article" date="1997" name="Yeast">
        <title>Isolation and characterization of the KlHEM1 gene in Kluyveromyces lactis.</title>
        <authorList>
            <person name="Gonzales-Dominguez M."/>
            <person name="Mendez-Carro C."/>
            <person name="Cerdan M.E."/>
        </authorList>
    </citation>
    <scope>NUCLEOTIDE SEQUENCE [GENOMIC DNA]</scope>
    <source>
        <strain>ATCC 8585 / CBS 2359 / DSM 70799 / NBRC 1267 / NRRL Y-1140 / WM37</strain>
    </source>
</reference>
<reference key="2">
    <citation type="journal article" date="2004" name="Nature">
        <title>Genome evolution in yeasts.</title>
        <authorList>
            <person name="Dujon B."/>
            <person name="Sherman D."/>
            <person name="Fischer G."/>
            <person name="Durrens P."/>
            <person name="Casaregola S."/>
            <person name="Lafontaine I."/>
            <person name="de Montigny J."/>
            <person name="Marck C."/>
            <person name="Neuveglise C."/>
            <person name="Talla E."/>
            <person name="Goffard N."/>
            <person name="Frangeul L."/>
            <person name="Aigle M."/>
            <person name="Anthouard V."/>
            <person name="Babour A."/>
            <person name="Barbe V."/>
            <person name="Barnay S."/>
            <person name="Blanchin S."/>
            <person name="Beckerich J.-M."/>
            <person name="Beyne E."/>
            <person name="Bleykasten C."/>
            <person name="Boisrame A."/>
            <person name="Boyer J."/>
            <person name="Cattolico L."/>
            <person name="Confanioleri F."/>
            <person name="de Daruvar A."/>
            <person name="Despons L."/>
            <person name="Fabre E."/>
            <person name="Fairhead C."/>
            <person name="Ferry-Dumazet H."/>
            <person name="Groppi A."/>
            <person name="Hantraye F."/>
            <person name="Hennequin C."/>
            <person name="Jauniaux N."/>
            <person name="Joyet P."/>
            <person name="Kachouri R."/>
            <person name="Kerrest A."/>
            <person name="Koszul R."/>
            <person name="Lemaire M."/>
            <person name="Lesur I."/>
            <person name="Ma L."/>
            <person name="Muller H."/>
            <person name="Nicaud J.-M."/>
            <person name="Nikolski M."/>
            <person name="Oztas S."/>
            <person name="Ozier-Kalogeropoulos O."/>
            <person name="Pellenz S."/>
            <person name="Potier S."/>
            <person name="Richard G.-F."/>
            <person name="Straub M.-L."/>
            <person name="Suleau A."/>
            <person name="Swennen D."/>
            <person name="Tekaia F."/>
            <person name="Wesolowski-Louvel M."/>
            <person name="Westhof E."/>
            <person name="Wirth B."/>
            <person name="Zeniou-Meyer M."/>
            <person name="Zivanovic Y."/>
            <person name="Bolotin-Fukuhara M."/>
            <person name="Thierry A."/>
            <person name="Bouchier C."/>
            <person name="Caudron B."/>
            <person name="Scarpelli C."/>
            <person name="Gaillardin C."/>
            <person name="Weissenbach J."/>
            <person name="Wincker P."/>
            <person name="Souciet J.-L."/>
        </authorList>
    </citation>
    <scope>NUCLEOTIDE SEQUENCE [LARGE SCALE GENOMIC DNA]</scope>
    <source>
        <strain>ATCC 8585 / CBS 2359 / DSM 70799 / NBRC 1267 / NRRL Y-1140 / WM37</strain>
    </source>
</reference>
<accession>P78698</accession>
<accession>Q6CT64</accession>
<keyword id="KW-0012">Acyltransferase</keyword>
<keyword id="KW-0350">Heme biosynthesis</keyword>
<keyword id="KW-0496">Mitochondrion</keyword>
<keyword id="KW-0663">Pyridoxal phosphate</keyword>
<keyword id="KW-1185">Reference proteome</keyword>
<keyword id="KW-0808">Transferase</keyword>
<keyword id="KW-0809">Transit peptide</keyword>
<proteinExistence type="inferred from homology"/>
<name>HEM1_KLULA</name>
<organism>
    <name type="scientific">Kluyveromyces lactis (strain ATCC 8585 / CBS 2359 / DSM 70799 / NBRC 1267 / NRRL Y-1140 / WM37)</name>
    <name type="common">Yeast</name>
    <name type="synonym">Candida sphaerica</name>
    <dbReference type="NCBI Taxonomy" id="284590"/>
    <lineage>
        <taxon>Eukaryota</taxon>
        <taxon>Fungi</taxon>
        <taxon>Dikarya</taxon>
        <taxon>Ascomycota</taxon>
        <taxon>Saccharomycotina</taxon>
        <taxon>Saccharomycetes</taxon>
        <taxon>Saccharomycetales</taxon>
        <taxon>Saccharomycetaceae</taxon>
        <taxon>Kluyveromyces</taxon>
    </lineage>
</organism>
<protein>
    <recommendedName>
        <fullName>5-aminolevulinate synthase, mitochondrial</fullName>
        <ecNumber>2.3.1.37</ecNumber>
    </recommendedName>
    <alternativeName>
        <fullName>5-aminolevulinic acid synthase</fullName>
    </alternativeName>
    <alternativeName>
        <fullName>Delta-ALA synthase</fullName>
    </alternativeName>
    <alternativeName>
        <fullName>Delta-aminolevulinate synthase</fullName>
    </alternativeName>
</protein>
<evidence type="ECO:0000250" key="1">
    <source>
        <dbReference type="UniProtKB" id="P09950"/>
    </source>
</evidence>
<evidence type="ECO:0000250" key="2">
    <source>
        <dbReference type="UniProtKB" id="P18079"/>
    </source>
</evidence>
<evidence type="ECO:0000255" key="3"/>
<evidence type="ECO:0000305" key="4"/>
<gene>
    <name type="primary">HEM1</name>
    <name type="ordered locus">KLLA0C15059g</name>
</gene>